<proteinExistence type="evidence at transcript level"/>
<reference key="1">
    <citation type="submission" date="2003-12" db="EMBL/GenBank/DDBJ databases">
        <title>Complete coding sequence of chick nSec-1 (munc-18-1).</title>
        <authorList>
            <person name="Li Q."/>
            <person name="Khanna R."/>
            <person name="Stanley E.F."/>
        </authorList>
    </citation>
    <scope>NUCLEOTIDE SEQUENCE [MRNA]</scope>
    <source>
        <tissue>Brain</tissue>
    </source>
</reference>
<dbReference type="EMBL" id="AY509605">
    <property type="protein sequence ID" value="AAR97943.1"/>
    <property type="molecule type" value="mRNA"/>
</dbReference>
<dbReference type="SMR" id="Q6R748"/>
<dbReference type="FunCoup" id="Q6R748">
    <property type="interactions" value="2436"/>
</dbReference>
<dbReference type="STRING" id="9031.ENSGALP00000052373"/>
<dbReference type="PaxDb" id="9031-ENSGALP00000011635"/>
<dbReference type="VEuPathDB" id="HostDB:geneid_404293"/>
<dbReference type="eggNOG" id="KOG1300">
    <property type="taxonomic scope" value="Eukaryota"/>
</dbReference>
<dbReference type="InParanoid" id="Q6R748"/>
<dbReference type="OrthoDB" id="2228at2759"/>
<dbReference type="PhylomeDB" id="Q6R748"/>
<dbReference type="Proteomes" id="UP000000539">
    <property type="component" value="Unassembled WGS sequence"/>
</dbReference>
<dbReference type="GO" id="GO:0005829">
    <property type="term" value="C:cytosol"/>
    <property type="evidence" value="ECO:0007669"/>
    <property type="project" value="UniProtKB-SubCell"/>
</dbReference>
<dbReference type="GO" id="GO:0005886">
    <property type="term" value="C:plasma membrane"/>
    <property type="evidence" value="ECO:0000318"/>
    <property type="project" value="GO_Central"/>
</dbReference>
<dbReference type="GO" id="GO:0098793">
    <property type="term" value="C:presynapse"/>
    <property type="evidence" value="ECO:0007669"/>
    <property type="project" value="GOC"/>
</dbReference>
<dbReference type="GO" id="GO:0030141">
    <property type="term" value="C:secretory granule"/>
    <property type="evidence" value="ECO:0000318"/>
    <property type="project" value="GO_Central"/>
</dbReference>
<dbReference type="GO" id="GO:0017075">
    <property type="term" value="F:syntaxin-1 binding"/>
    <property type="evidence" value="ECO:0000318"/>
    <property type="project" value="GO_Central"/>
</dbReference>
<dbReference type="GO" id="GO:0006886">
    <property type="term" value="P:intracellular protein transport"/>
    <property type="evidence" value="ECO:0000318"/>
    <property type="project" value="GO_Central"/>
</dbReference>
<dbReference type="GO" id="GO:0099525">
    <property type="term" value="P:presynaptic dense core vesicle exocytosis"/>
    <property type="evidence" value="ECO:0000318"/>
    <property type="project" value="GO_Central"/>
</dbReference>
<dbReference type="GO" id="GO:0006904">
    <property type="term" value="P:vesicle docking involved in exocytosis"/>
    <property type="evidence" value="ECO:0000318"/>
    <property type="project" value="GO_Central"/>
</dbReference>
<dbReference type="FunFam" id="1.25.40.60:FF:000001">
    <property type="entry name" value="syntaxin-binding protein 1 isoform X2"/>
    <property type="match status" value="1"/>
</dbReference>
<dbReference type="FunFam" id="3.40.50.2060:FF:000001">
    <property type="entry name" value="syntaxin-binding protein 1 isoform X2"/>
    <property type="match status" value="1"/>
</dbReference>
<dbReference type="FunFam" id="3.90.830.10:FF:000001">
    <property type="entry name" value="syntaxin-binding protein 1 isoform X2"/>
    <property type="match status" value="1"/>
</dbReference>
<dbReference type="Gene3D" id="1.25.40.60">
    <property type="match status" value="1"/>
</dbReference>
<dbReference type="Gene3D" id="3.40.50.1910">
    <property type="match status" value="1"/>
</dbReference>
<dbReference type="Gene3D" id="3.40.50.2060">
    <property type="match status" value="1"/>
</dbReference>
<dbReference type="Gene3D" id="3.90.830.10">
    <property type="entry name" value="Syntaxin Binding Protein 1, Chain A, domain 2"/>
    <property type="match status" value="1"/>
</dbReference>
<dbReference type="InterPro" id="IPR043154">
    <property type="entry name" value="Sec-1-like_dom1"/>
</dbReference>
<dbReference type="InterPro" id="IPR043127">
    <property type="entry name" value="Sec-1-like_dom3a"/>
</dbReference>
<dbReference type="InterPro" id="IPR001619">
    <property type="entry name" value="Sec1-like"/>
</dbReference>
<dbReference type="InterPro" id="IPR027482">
    <property type="entry name" value="Sec1-like_dom2"/>
</dbReference>
<dbReference type="InterPro" id="IPR036045">
    <property type="entry name" value="Sec1-like_sf"/>
</dbReference>
<dbReference type="PANTHER" id="PTHR11679">
    <property type="entry name" value="VESICLE PROTEIN SORTING-ASSOCIATED"/>
    <property type="match status" value="1"/>
</dbReference>
<dbReference type="Pfam" id="PF00995">
    <property type="entry name" value="Sec1"/>
    <property type="match status" value="1"/>
</dbReference>
<dbReference type="PIRSF" id="PIRSF005715">
    <property type="entry name" value="VPS45_Sec1"/>
    <property type="match status" value="1"/>
</dbReference>
<dbReference type="SUPFAM" id="SSF56815">
    <property type="entry name" value="Sec1/munc18-like (SM) proteins"/>
    <property type="match status" value="1"/>
</dbReference>
<gene>
    <name type="primary">STXBP1</name>
    <name type="synonym">UNC18A</name>
</gene>
<accession>Q6R748</accession>
<sequence length="594" mass="67473">MAPIGLKAVVGEKIMHDVIKKVKKKGEWKVLVVDQLSMRMLSSCCKMTDIMTEGITIVEDINKRREPLPSLEAVYLITPSEKSVHSLISDFKDPPTSKYRAAHVFFTDSCPDALFNELVKSRAAKVIKTLTEINIAFLPSESQVYSLDSADSFQSFYSPHKAQMKNPILERLAEQIATLCATLKEYPAVRYRGDYKDNAMLAQLIQDKLDAYKADDPTMGEGPDKARSQLLILDRGFDPASPVLHELTFQAMSYDLLPIENDVYKYETSGIGEARVKEVLLDEDDDLWVSLRHKHIAEVSQEVTRSLKEFSSSKRMNTGDKTTMRDLSQMLKKMPQYQKELSKYSTHLHLAEDCMKHYQGTVDKLCRVEQDLAMGTDAEGEKIKDPMRAIVPILLDGNVSTYDKIRIILLYIFLKNGITEENLNKLIQHAQIPAEDSEIITNMAHLGVPIITDSTLRRRSKPERKERISEQTYQLSRWTPIIKDIMEDTIEDKLDTKHYPYISTRSSASFSTTAVSARYGHWHKNKAPGEYRSGPRLIIFILGGVSLNEMRCAYEVTQANGKWEVLIGSTHILTPQKLLDTLKKLNKTDEEISS</sequence>
<organism>
    <name type="scientific">Gallus gallus</name>
    <name type="common">Chicken</name>
    <dbReference type="NCBI Taxonomy" id="9031"/>
    <lineage>
        <taxon>Eukaryota</taxon>
        <taxon>Metazoa</taxon>
        <taxon>Chordata</taxon>
        <taxon>Craniata</taxon>
        <taxon>Vertebrata</taxon>
        <taxon>Euteleostomi</taxon>
        <taxon>Archelosauria</taxon>
        <taxon>Archosauria</taxon>
        <taxon>Dinosauria</taxon>
        <taxon>Saurischia</taxon>
        <taxon>Theropoda</taxon>
        <taxon>Coelurosauria</taxon>
        <taxon>Aves</taxon>
        <taxon>Neognathae</taxon>
        <taxon>Galloanserae</taxon>
        <taxon>Galliformes</taxon>
        <taxon>Phasianidae</taxon>
        <taxon>Phasianinae</taxon>
        <taxon>Gallus</taxon>
    </lineage>
</organism>
<feature type="chain" id="PRO_0000291776" description="Syntaxin-binding protein 1">
    <location>
        <begin position="1"/>
        <end position="594"/>
    </location>
</feature>
<name>STXB1_CHICK</name>
<keyword id="KW-0963">Cytoplasm</keyword>
<keyword id="KW-0472">Membrane</keyword>
<keyword id="KW-0653">Protein transport</keyword>
<keyword id="KW-1185">Reference proteome</keyword>
<keyword id="KW-0813">Transport</keyword>
<protein>
    <recommendedName>
        <fullName>Syntaxin-binding protein 1</fullName>
    </recommendedName>
    <alternativeName>
        <fullName>N-Sec1</fullName>
    </alternativeName>
    <alternativeName>
        <fullName>Protein unc-18 homolog 1</fullName>
        <shortName>Unc18-1</shortName>
    </alternativeName>
    <alternativeName>
        <fullName>Protein unc-18 homolog A</fullName>
        <shortName>Unc-18A</shortName>
    </alternativeName>
</protein>
<comment type="function">
    <text evidence="1 2">May participate in the regulation of synaptic vesicle docking and fusion, possibly through interaction with GTP-binding proteins. Essential for neurotransmission and binds syntaxins, components of the synaptic vesicle fusion machinery. Involved in the release of neurotransmitters from neurons through interacting with SNARE complex component STX1A and mediating the assembly of the SNARE complex at synaptic membranes (By similarity). May play a role in determining the specificity of intracellular fusion reactions (By similarity).</text>
</comment>
<comment type="subcellular location">
    <subcellularLocation>
        <location evidence="3">Cytoplasm</location>
        <location evidence="3">Cytosol</location>
    </subcellularLocation>
    <subcellularLocation>
        <location evidence="1">Membrane</location>
        <topology evidence="1">Peripheral membrane protein</topology>
    </subcellularLocation>
</comment>
<comment type="similarity">
    <text evidence="4">Belongs to the STXBP/unc-18/SEC1 family.</text>
</comment>
<evidence type="ECO:0000250" key="1"/>
<evidence type="ECO:0000250" key="2">
    <source>
        <dbReference type="UniProtKB" id="O08599"/>
    </source>
</evidence>
<evidence type="ECO:0000250" key="3">
    <source>
        <dbReference type="UniProtKB" id="P61764"/>
    </source>
</evidence>
<evidence type="ECO:0000305" key="4"/>